<reference key="1">
    <citation type="journal article" date="2001" name="Science">
        <title>Comparative genomics of Listeria species.</title>
        <authorList>
            <person name="Glaser P."/>
            <person name="Frangeul L."/>
            <person name="Buchrieser C."/>
            <person name="Rusniok C."/>
            <person name="Amend A."/>
            <person name="Baquero F."/>
            <person name="Berche P."/>
            <person name="Bloecker H."/>
            <person name="Brandt P."/>
            <person name="Chakraborty T."/>
            <person name="Charbit A."/>
            <person name="Chetouani F."/>
            <person name="Couve E."/>
            <person name="de Daruvar A."/>
            <person name="Dehoux P."/>
            <person name="Domann E."/>
            <person name="Dominguez-Bernal G."/>
            <person name="Duchaud E."/>
            <person name="Durant L."/>
            <person name="Dussurget O."/>
            <person name="Entian K.-D."/>
            <person name="Fsihi H."/>
            <person name="Garcia-del Portillo F."/>
            <person name="Garrido P."/>
            <person name="Gautier L."/>
            <person name="Goebel W."/>
            <person name="Gomez-Lopez N."/>
            <person name="Hain T."/>
            <person name="Hauf J."/>
            <person name="Jackson D."/>
            <person name="Jones L.-M."/>
            <person name="Kaerst U."/>
            <person name="Kreft J."/>
            <person name="Kuhn M."/>
            <person name="Kunst F."/>
            <person name="Kurapkat G."/>
            <person name="Madueno E."/>
            <person name="Maitournam A."/>
            <person name="Mata Vicente J."/>
            <person name="Ng E."/>
            <person name="Nedjari H."/>
            <person name="Nordsiek G."/>
            <person name="Novella S."/>
            <person name="de Pablos B."/>
            <person name="Perez-Diaz J.-C."/>
            <person name="Purcell R."/>
            <person name="Remmel B."/>
            <person name="Rose M."/>
            <person name="Schlueter T."/>
            <person name="Simoes N."/>
            <person name="Tierrez A."/>
            <person name="Vazquez-Boland J.-A."/>
            <person name="Voss H."/>
            <person name="Wehland J."/>
            <person name="Cossart P."/>
        </authorList>
    </citation>
    <scope>NUCLEOTIDE SEQUENCE [LARGE SCALE GENOMIC DNA]</scope>
    <source>
        <strain>ATCC BAA-680 / CLIP 11262</strain>
    </source>
</reference>
<accession>Q927T4</accession>
<proteinExistence type="inferred from homology"/>
<evidence type="ECO:0000255" key="1">
    <source>
        <dbReference type="HAMAP-Rule" id="MF_01227"/>
    </source>
</evidence>
<feature type="chain" id="PRO_0000138196" description="CTP synthase">
    <location>
        <begin position="1"/>
        <end position="532"/>
    </location>
</feature>
<feature type="domain" description="Glutamine amidotransferase type-1" evidence="1">
    <location>
        <begin position="292"/>
        <end position="532"/>
    </location>
</feature>
<feature type="region of interest" description="Amidoligase domain" evidence="1">
    <location>
        <begin position="1"/>
        <end position="267"/>
    </location>
</feature>
<feature type="active site" description="Nucleophile; for glutamine hydrolysis" evidence="1">
    <location>
        <position position="381"/>
    </location>
</feature>
<feature type="active site" evidence="1">
    <location>
        <position position="507"/>
    </location>
</feature>
<feature type="active site" evidence="1">
    <location>
        <position position="509"/>
    </location>
</feature>
<feature type="binding site" evidence="1">
    <location>
        <position position="13"/>
    </location>
    <ligand>
        <name>CTP</name>
        <dbReference type="ChEBI" id="CHEBI:37563"/>
        <note>allosteric inhibitor</note>
    </ligand>
</feature>
<feature type="binding site" evidence="1">
    <location>
        <position position="13"/>
    </location>
    <ligand>
        <name>UTP</name>
        <dbReference type="ChEBI" id="CHEBI:46398"/>
    </ligand>
</feature>
<feature type="binding site" evidence="1">
    <location>
        <begin position="14"/>
        <end position="19"/>
    </location>
    <ligand>
        <name>ATP</name>
        <dbReference type="ChEBI" id="CHEBI:30616"/>
    </ligand>
</feature>
<feature type="binding site" evidence="1">
    <location>
        <position position="54"/>
    </location>
    <ligand>
        <name>L-glutamine</name>
        <dbReference type="ChEBI" id="CHEBI:58359"/>
    </ligand>
</feature>
<feature type="binding site" evidence="1">
    <location>
        <position position="71"/>
    </location>
    <ligand>
        <name>ATP</name>
        <dbReference type="ChEBI" id="CHEBI:30616"/>
    </ligand>
</feature>
<feature type="binding site" evidence="1">
    <location>
        <position position="71"/>
    </location>
    <ligand>
        <name>Mg(2+)</name>
        <dbReference type="ChEBI" id="CHEBI:18420"/>
    </ligand>
</feature>
<feature type="binding site" evidence="1">
    <location>
        <position position="141"/>
    </location>
    <ligand>
        <name>Mg(2+)</name>
        <dbReference type="ChEBI" id="CHEBI:18420"/>
    </ligand>
</feature>
<feature type="binding site" evidence="1">
    <location>
        <begin position="148"/>
        <end position="150"/>
    </location>
    <ligand>
        <name>CTP</name>
        <dbReference type="ChEBI" id="CHEBI:37563"/>
        <note>allosteric inhibitor</note>
    </ligand>
</feature>
<feature type="binding site" evidence="1">
    <location>
        <begin position="188"/>
        <end position="193"/>
    </location>
    <ligand>
        <name>CTP</name>
        <dbReference type="ChEBI" id="CHEBI:37563"/>
        <note>allosteric inhibitor</note>
    </ligand>
</feature>
<feature type="binding site" evidence="1">
    <location>
        <begin position="188"/>
        <end position="193"/>
    </location>
    <ligand>
        <name>UTP</name>
        <dbReference type="ChEBI" id="CHEBI:46398"/>
    </ligand>
</feature>
<feature type="binding site" evidence="1">
    <location>
        <position position="224"/>
    </location>
    <ligand>
        <name>CTP</name>
        <dbReference type="ChEBI" id="CHEBI:37563"/>
        <note>allosteric inhibitor</note>
    </ligand>
</feature>
<feature type="binding site" evidence="1">
    <location>
        <position position="224"/>
    </location>
    <ligand>
        <name>UTP</name>
        <dbReference type="ChEBI" id="CHEBI:46398"/>
    </ligand>
</feature>
<feature type="binding site" evidence="1">
    <location>
        <position position="354"/>
    </location>
    <ligand>
        <name>L-glutamine</name>
        <dbReference type="ChEBI" id="CHEBI:58359"/>
    </ligand>
</feature>
<feature type="binding site" evidence="1">
    <location>
        <begin position="382"/>
        <end position="385"/>
    </location>
    <ligand>
        <name>L-glutamine</name>
        <dbReference type="ChEBI" id="CHEBI:58359"/>
    </ligand>
</feature>
<feature type="binding site" evidence="1">
    <location>
        <position position="405"/>
    </location>
    <ligand>
        <name>L-glutamine</name>
        <dbReference type="ChEBI" id="CHEBI:58359"/>
    </ligand>
</feature>
<feature type="binding site" evidence="1">
    <location>
        <position position="462"/>
    </location>
    <ligand>
        <name>L-glutamine</name>
        <dbReference type="ChEBI" id="CHEBI:58359"/>
    </ligand>
</feature>
<gene>
    <name evidence="1" type="primary">pyrG</name>
    <name type="ordered locus">lin2704</name>
</gene>
<sequence length="532" mass="59569">MTKYIFVTGGVVSSIGKGITAASLGRLLKNRGLSVTIQKFDPYINVDPGTMSPYQHGEVYVTDDGAETDLDLGHYERFIDINLNKYSNVTTGKVYSEVIKKERRGDYLGGTVQVIPHITNELKDRVFRAARMTNSDIIITEIGGTVGDIESLPFLEAIRQIKSDVGAENVLYIHTTLIPYIKAAGEMKTKPTQHSVKELRSLGIQPNIIVVRTEQPVSQEMKDKIALFCDIKASEVIESRDEETLYNVPLSLQKQKMDDIVLEHLQLEAPQAEMTDWKNLVHRVKNLSKKVRIGLVGKYVSLQDAYLSVAEALRHAGYEHDAEIEIDWIDSEKVTKENVAEIMKDVDGILVPGGFGDRAIEGKIAAIEYARVNKVPYFGICLGMQLATVEFARNVLGLEGAHSAEIEPETKHNIIDLLPEQKNIENMGGTLRLGLYPARIKQGTKAEAAYGTTLVEERHRHRYEFNNEYREQMEEAGMIVSATSPDGRLVEVVELADHPWFVACQYHPEFISRPNRPQSLFKDFVGAALNNK</sequence>
<keyword id="KW-0067">ATP-binding</keyword>
<keyword id="KW-0315">Glutamine amidotransferase</keyword>
<keyword id="KW-0436">Ligase</keyword>
<keyword id="KW-0460">Magnesium</keyword>
<keyword id="KW-0479">Metal-binding</keyword>
<keyword id="KW-0547">Nucleotide-binding</keyword>
<keyword id="KW-0665">Pyrimidine biosynthesis</keyword>
<protein>
    <recommendedName>
        <fullName evidence="1">CTP synthase</fullName>
        <ecNumber evidence="1">6.3.4.2</ecNumber>
    </recommendedName>
    <alternativeName>
        <fullName evidence="1">Cytidine 5'-triphosphate synthase</fullName>
    </alternativeName>
    <alternativeName>
        <fullName evidence="1">Cytidine triphosphate synthetase</fullName>
        <shortName evidence="1">CTP synthetase</shortName>
        <shortName evidence="1">CTPS</shortName>
    </alternativeName>
    <alternativeName>
        <fullName evidence="1">UTP--ammonia ligase</fullName>
    </alternativeName>
</protein>
<dbReference type="EC" id="6.3.4.2" evidence="1"/>
<dbReference type="EMBL" id="AL596173">
    <property type="protein sequence ID" value="CAC97930.1"/>
    <property type="molecule type" value="Genomic_DNA"/>
</dbReference>
<dbReference type="PIR" id="AB1770">
    <property type="entry name" value="AB1770"/>
</dbReference>
<dbReference type="RefSeq" id="WP_010991341.1">
    <property type="nucleotide sequence ID" value="NC_003212.1"/>
</dbReference>
<dbReference type="SMR" id="Q927T4"/>
<dbReference type="STRING" id="272626.gene:17567084"/>
<dbReference type="GeneID" id="93235968"/>
<dbReference type="KEGG" id="lin:pyrG"/>
<dbReference type="eggNOG" id="COG0504">
    <property type="taxonomic scope" value="Bacteria"/>
</dbReference>
<dbReference type="HOGENOM" id="CLU_011675_5_0_9"/>
<dbReference type="OrthoDB" id="9801107at2"/>
<dbReference type="UniPathway" id="UPA00159">
    <property type="reaction ID" value="UER00277"/>
</dbReference>
<dbReference type="Proteomes" id="UP000002513">
    <property type="component" value="Chromosome"/>
</dbReference>
<dbReference type="GO" id="GO:0005829">
    <property type="term" value="C:cytosol"/>
    <property type="evidence" value="ECO:0007669"/>
    <property type="project" value="TreeGrafter"/>
</dbReference>
<dbReference type="GO" id="GO:0005524">
    <property type="term" value="F:ATP binding"/>
    <property type="evidence" value="ECO:0007669"/>
    <property type="project" value="UniProtKB-KW"/>
</dbReference>
<dbReference type="GO" id="GO:0003883">
    <property type="term" value="F:CTP synthase activity"/>
    <property type="evidence" value="ECO:0007669"/>
    <property type="project" value="UniProtKB-UniRule"/>
</dbReference>
<dbReference type="GO" id="GO:0004359">
    <property type="term" value="F:glutaminase activity"/>
    <property type="evidence" value="ECO:0007669"/>
    <property type="project" value="RHEA"/>
</dbReference>
<dbReference type="GO" id="GO:0042802">
    <property type="term" value="F:identical protein binding"/>
    <property type="evidence" value="ECO:0007669"/>
    <property type="project" value="TreeGrafter"/>
</dbReference>
<dbReference type="GO" id="GO:0046872">
    <property type="term" value="F:metal ion binding"/>
    <property type="evidence" value="ECO:0007669"/>
    <property type="project" value="UniProtKB-KW"/>
</dbReference>
<dbReference type="GO" id="GO:0044210">
    <property type="term" value="P:'de novo' CTP biosynthetic process"/>
    <property type="evidence" value="ECO:0007669"/>
    <property type="project" value="UniProtKB-UniRule"/>
</dbReference>
<dbReference type="GO" id="GO:0019856">
    <property type="term" value="P:pyrimidine nucleobase biosynthetic process"/>
    <property type="evidence" value="ECO:0007669"/>
    <property type="project" value="TreeGrafter"/>
</dbReference>
<dbReference type="CDD" id="cd03113">
    <property type="entry name" value="CTPS_N"/>
    <property type="match status" value="1"/>
</dbReference>
<dbReference type="CDD" id="cd01746">
    <property type="entry name" value="GATase1_CTP_Synthase"/>
    <property type="match status" value="1"/>
</dbReference>
<dbReference type="FunFam" id="3.40.50.300:FF:000009">
    <property type="entry name" value="CTP synthase"/>
    <property type="match status" value="1"/>
</dbReference>
<dbReference type="FunFam" id="3.40.50.880:FF:000002">
    <property type="entry name" value="CTP synthase"/>
    <property type="match status" value="1"/>
</dbReference>
<dbReference type="Gene3D" id="3.40.50.880">
    <property type="match status" value="1"/>
</dbReference>
<dbReference type="Gene3D" id="3.40.50.300">
    <property type="entry name" value="P-loop containing nucleotide triphosphate hydrolases"/>
    <property type="match status" value="1"/>
</dbReference>
<dbReference type="HAMAP" id="MF_01227">
    <property type="entry name" value="PyrG"/>
    <property type="match status" value="1"/>
</dbReference>
<dbReference type="InterPro" id="IPR029062">
    <property type="entry name" value="Class_I_gatase-like"/>
</dbReference>
<dbReference type="InterPro" id="IPR004468">
    <property type="entry name" value="CTP_synthase"/>
</dbReference>
<dbReference type="InterPro" id="IPR017456">
    <property type="entry name" value="CTP_synthase_N"/>
</dbReference>
<dbReference type="InterPro" id="IPR017926">
    <property type="entry name" value="GATASE"/>
</dbReference>
<dbReference type="InterPro" id="IPR033828">
    <property type="entry name" value="GATase1_CTP_Synthase"/>
</dbReference>
<dbReference type="InterPro" id="IPR027417">
    <property type="entry name" value="P-loop_NTPase"/>
</dbReference>
<dbReference type="NCBIfam" id="NF003792">
    <property type="entry name" value="PRK05380.1"/>
    <property type="match status" value="1"/>
</dbReference>
<dbReference type="NCBIfam" id="TIGR00337">
    <property type="entry name" value="PyrG"/>
    <property type="match status" value="1"/>
</dbReference>
<dbReference type="PANTHER" id="PTHR11550">
    <property type="entry name" value="CTP SYNTHASE"/>
    <property type="match status" value="1"/>
</dbReference>
<dbReference type="PANTHER" id="PTHR11550:SF0">
    <property type="entry name" value="CTP SYNTHASE-RELATED"/>
    <property type="match status" value="1"/>
</dbReference>
<dbReference type="Pfam" id="PF06418">
    <property type="entry name" value="CTP_synth_N"/>
    <property type="match status" value="1"/>
</dbReference>
<dbReference type="Pfam" id="PF00117">
    <property type="entry name" value="GATase"/>
    <property type="match status" value="1"/>
</dbReference>
<dbReference type="SUPFAM" id="SSF52317">
    <property type="entry name" value="Class I glutamine amidotransferase-like"/>
    <property type="match status" value="1"/>
</dbReference>
<dbReference type="SUPFAM" id="SSF52540">
    <property type="entry name" value="P-loop containing nucleoside triphosphate hydrolases"/>
    <property type="match status" value="1"/>
</dbReference>
<dbReference type="PROSITE" id="PS51273">
    <property type="entry name" value="GATASE_TYPE_1"/>
    <property type="match status" value="1"/>
</dbReference>
<organism>
    <name type="scientific">Listeria innocua serovar 6a (strain ATCC BAA-680 / CLIP 11262)</name>
    <dbReference type="NCBI Taxonomy" id="272626"/>
    <lineage>
        <taxon>Bacteria</taxon>
        <taxon>Bacillati</taxon>
        <taxon>Bacillota</taxon>
        <taxon>Bacilli</taxon>
        <taxon>Bacillales</taxon>
        <taxon>Listeriaceae</taxon>
        <taxon>Listeria</taxon>
    </lineage>
</organism>
<comment type="function">
    <text evidence="1">Catalyzes the ATP-dependent amination of UTP to CTP with either L-glutamine or ammonia as the source of nitrogen. Regulates intracellular CTP levels through interactions with the four ribonucleotide triphosphates.</text>
</comment>
<comment type="catalytic activity">
    <reaction evidence="1">
        <text>UTP + L-glutamine + ATP + H2O = CTP + L-glutamate + ADP + phosphate + 2 H(+)</text>
        <dbReference type="Rhea" id="RHEA:26426"/>
        <dbReference type="ChEBI" id="CHEBI:15377"/>
        <dbReference type="ChEBI" id="CHEBI:15378"/>
        <dbReference type="ChEBI" id="CHEBI:29985"/>
        <dbReference type="ChEBI" id="CHEBI:30616"/>
        <dbReference type="ChEBI" id="CHEBI:37563"/>
        <dbReference type="ChEBI" id="CHEBI:43474"/>
        <dbReference type="ChEBI" id="CHEBI:46398"/>
        <dbReference type="ChEBI" id="CHEBI:58359"/>
        <dbReference type="ChEBI" id="CHEBI:456216"/>
        <dbReference type="EC" id="6.3.4.2"/>
    </reaction>
</comment>
<comment type="catalytic activity">
    <reaction evidence="1">
        <text>L-glutamine + H2O = L-glutamate + NH4(+)</text>
        <dbReference type="Rhea" id="RHEA:15889"/>
        <dbReference type="ChEBI" id="CHEBI:15377"/>
        <dbReference type="ChEBI" id="CHEBI:28938"/>
        <dbReference type="ChEBI" id="CHEBI:29985"/>
        <dbReference type="ChEBI" id="CHEBI:58359"/>
    </reaction>
</comment>
<comment type="catalytic activity">
    <reaction evidence="1">
        <text>UTP + NH4(+) + ATP = CTP + ADP + phosphate + 2 H(+)</text>
        <dbReference type="Rhea" id="RHEA:16597"/>
        <dbReference type="ChEBI" id="CHEBI:15378"/>
        <dbReference type="ChEBI" id="CHEBI:28938"/>
        <dbReference type="ChEBI" id="CHEBI:30616"/>
        <dbReference type="ChEBI" id="CHEBI:37563"/>
        <dbReference type="ChEBI" id="CHEBI:43474"/>
        <dbReference type="ChEBI" id="CHEBI:46398"/>
        <dbReference type="ChEBI" id="CHEBI:456216"/>
    </reaction>
</comment>
<comment type="activity regulation">
    <text evidence="1">Allosterically activated by GTP, when glutamine is the substrate; GTP has no effect on the reaction when ammonia is the substrate. The allosteric effector GTP functions by stabilizing the protein conformation that binds the tetrahedral intermediate(s) formed during glutamine hydrolysis. Inhibited by the product CTP, via allosteric rather than competitive inhibition.</text>
</comment>
<comment type="pathway">
    <text evidence="1">Pyrimidine metabolism; CTP biosynthesis via de novo pathway; CTP from UDP: step 2/2.</text>
</comment>
<comment type="subunit">
    <text evidence="1">Homotetramer.</text>
</comment>
<comment type="miscellaneous">
    <text evidence="1">CTPSs have evolved a hybrid strategy for distinguishing between UTP and CTP. The overlapping regions of the product feedback inhibitory and substrate sites recognize a common feature in both compounds, the triphosphate moiety. To differentiate isosteric substrate and product pyrimidine rings, an additional pocket far from the expected kinase/ligase catalytic site, specifically recognizes the cytosine and ribose portions of the product inhibitor.</text>
</comment>
<comment type="similarity">
    <text evidence="1">Belongs to the CTP synthase family.</text>
</comment>
<name>PYRG_LISIN</name>